<accession>Q68W84</accession>
<dbReference type="EMBL" id="AE017197">
    <property type="protein sequence ID" value="AAU04108.1"/>
    <property type="molecule type" value="Genomic_DNA"/>
</dbReference>
<dbReference type="RefSeq" id="WP_011191085.1">
    <property type="nucleotide sequence ID" value="NC_006142.1"/>
</dbReference>
<dbReference type="SMR" id="Q68W84"/>
<dbReference type="KEGG" id="rty:RT0645"/>
<dbReference type="eggNOG" id="COG0092">
    <property type="taxonomic scope" value="Bacteria"/>
</dbReference>
<dbReference type="HOGENOM" id="CLU_058591_0_2_5"/>
<dbReference type="OrthoDB" id="9806396at2"/>
<dbReference type="Proteomes" id="UP000000604">
    <property type="component" value="Chromosome"/>
</dbReference>
<dbReference type="GO" id="GO:0022627">
    <property type="term" value="C:cytosolic small ribosomal subunit"/>
    <property type="evidence" value="ECO:0007669"/>
    <property type="project" value="TreeGrafter"/>
</dbReference>
<dbReference type="GO" id="GO:0003729">
    <property type="term" value="F:mRNA binding"/>
    <property type="evidence" value="ECO:0007669"/>
    <property type="project" value="UniProtKB-UniRule"/>
</dbReference>
<dbReference type="GO" id="GO:0019843">
    <property type="term" value="F:rRNA binding"/>
    <property type="evidence" value="ECO:0007669"/>
    <property type="project" value="UniProtKB-UniRule"/>
</dbReference>
<dbReference type="GO" id="GO:0003735">
    <property type="term" value="F:structural constituent of ribosome"/>
    <property type="evidence" value="ECO:0007669"/>
    <property type="project" value="InterPro"/>
</dbReference>
<dbReference type="GO" id="GO:0006412">
    <property type="term" value="P:translation"/>
    <property type="evidence" value="ECO:0007669"/>
    <property type="project" value="UniProtKB-UniRule"/>
</dbReference>
<dbReference type="CDD" id="cd02412">
    <property type="entry name" value="KH-II_30S_S3"/>
    <property type="match status" value="1"/>
</dbReference>
<dbReference type="FunFam" id="3.30.300.20:FF:000001">
    <property type="entry name" value="30S ribosomal protein S3"/>
    <property type="match status" value="1"/>
</dbReference>
<dbReference type="Gene3D" id="3.30.300.20">
    <property type="match status" value="1"/>
</dbReference>
<dbReference type="Gene3D" id="3.30.1140.32">
    <property type="entry name" value="Ribosomal protein S3, C-terminal domain"/>
    <property type="match status" value="1"/>
</dbReference>
<dbReference type="HAMAP" id="MF_01309_B">
    <property type="entry name" value="Ribosomal_uS3_B"/>
    <property type="match status" value="1"/>
</dbReference>
<dbReference type="InterPro" id="IPR004087">
    <property type="entry name" value="KH_dom"/>
</dbReference>
<dbReference type="InterPro" id="IPR015946">
    <property type="entry name" value="KH_dom-like_a/b"/>
</dbReference>
<dbReference type="InterPro" id="IPR004044">
    <property type="entry name" value="KH_dom_type_2"/>
</dbReference>
<dbReference type="InterPro" id="IPR009019">
    <property type="entry name" value="KH_sf_prok-type"/>
</dbReference>
<dbReference type="InterPro" id="IPR036419">
    <property type="entry name" value="Ribosomal_S3_C_sf"/>
</dbReference>
<dbReference type="InterPro" id="IPR005704">
    <property type="entry name" value="Ribosomal_uS3_bac-typ"/>
</dbReference>
<dbReference type="InterPro" id="IPR001351">
    <property type="entry name" value="Ribosomal_uS3_C"/>
</dbReference>
<dbReference type="InterPro" id="IPR018280">
    <property type="entry name" value="Ribosomal_uS3_CS"/>
</dbReference>
<dbReference type="NCBIfam" id="TIGR01009">
    <property type="entry name" value="rpsC_bact"/>
    <property type="match status" value="1"/>
</dbReference>
<dbReference type="PANTHER" id="PTHR11760">
    <property type="entry name" value="30S/40S RIBOSOMAL PROTEIN S3"/>
    <property type="match status" value="1"/>
</dbReference>
<dbReference type="PANTHER" id="PTHR11760:SF19">
    <property type="entry name" value="SMALL RIBOSOMAL SUBUNIT PROTEIN US3C"/>
    <property type="match status" value="1"/>
</dbReference>
<dbReference type="Pfam" id="PF07650">
    <property type="entry name" value="KH_2"/>
    <property type="match status" value="1"/>
</dbReference>
<dbReference type="Pfam" id="PF00189">
    <property type="entry name" value="Ribosomal_S3_C"/>
    <property type="match status" value="1"/>
</dbReference>
<dbReference type="SMART" id="SM00322">
    <property type="entry name" value="KH"/>
    <property type="match status" value="1"/>
</dbReference>
<dbReference type="SUPFAM" id="SSF54814">
    <property type="entry name" value="Prokaryotic type KH domain (KH-domain type II)"/>
    <property type="match status" value="1"/>
</dbReference>
<dbReference type="SUPFAM" id="SSF54821">
    <property type="entry name" value="Ribosomal protein S3 C-terminal domain"/>
    <property type="match status" value="1"/>
</dbReference>
<dbReference type="PROSITE" id="PS50823">
    <property type="entry name" value="KH_TYPE_2"/>
    <property type="match status" value="1"/>
</dbReference>
<dbReference type="PROSITE" id="PS00548">
    <property type="entry name" value="RIBOSOMAL_S3"/>
    <property type="match status" value="1"/>
</dbReference>
<proteinExistence type="inferred from homology"/>
<name>RS3_RICTY</name>
<reference key="1">
    <citation type="journal article" date="2004" name="J. Bacteriol.">
        <title>Complete genome sequence of Rickettsia typhi and comparison with sequences of other Rickettsiae.</title>
        <authorList>
            <person name="McLeod M.P."/>
            <person name="Qin X."/>
            <person name="Karpathy S.E."/>
            <person name="Gioia J."/>
            <person name="Highlander S.K."/>
            <person name="Fox G.E."/>
            <person name="McNeill T.Z."/>
            <person name="Jiang H."/>
            <person name="Muzny D."/>
            <person name="Jacob L.S."/>
            <person name="Hawes A.C."/>
            <person name="Sodergren E."/>
            <person name="Gill R."/>
            <person name="Hume J."/>
            <person name="Morgan M."/>
            <person name="Fan G."/>
            <person name="Amin A.G."/>
            <person name="Gibbs R.A."/>
            <person name="Hong C."/>
            <person name="Yu X.-J."/>
            <person name="Walker D.H."/>
            <person name="Weinstock G.M."/>
        </authorList>
    </citation>
    <scope>NUCLEOTIDE SEQUENCE [LARGE SCALE GENOMIC DNA]</scope>
    <source>
        <strain>ATCC VR-144 / Wilmington</strain>
    </source>
</reference>
<comment type="function">
    <text evidence="1">Binds the lower part of the 30S subunit head. Binds mRNA in the 70S ribosome, positioning it for translation.</text>
</comment>
<comment type="subunit">
    <text evidence="1">Part of the 30S ribosomal subunit. Forms a tight complex with proteins S10 and S14.</text>
</comment>
<comment type="similarity">
    <text evidence="1">Belongs to the universal ribosomal protein uS3 family.</text>
</comment>
<evidence type="ECO:0000255" key="1">
    <source>
        <dbReference type="HAMAP-Rule" id="MF_01309"/>
    </source>
</evidence>
<evidence type="ECO:0000305" key="2"/>
<gene>
    <name evidence="1" type="primary">rpsC</name>
    <name type="ordered locus">RT0645</name>
</gene>
<protein>
    <recommendedName>
        <fullName evidence="1">Small ribosomal subunit protein uS3</fullName>
    </recommendedName>
    <alternativeName>
        <fullName evidence="2">30S ribosomal protein S3</fullName>
    </alternativeName>
</protein>
<organism>
    <name type="scientific">Rickettsia typhi (strain ATCC VR-144 / Wilmington)</name>
    <dbReference type="NCBI Taxonomy" id="257363"/>
    <lineage>
        <taxon>Bacteria</taxon>
        <taxon>Pseudomonadati</taxon>
        <taxon>Pseudomonadota</taxon>
        <taxon>Alphaproteobacteria</taxon>
        <taxon>Rickettsiales</taxon>
        <taxon>Rickettsiaceae</taxon>
        <taxon>Rickettsieae</taxon>
        <taxon>Rickettsia</taxon>
        <taxon>typhus group</taxon>
    </lineage>
</organism>
<keyword id="KW-0687">Ribonucleoprotein</keyword>
<keyword id="KW-0689">Ribosomal protein</keyword>
<keyword id="KW-0694">RNA-binding</keyword>
<keyword id="KW-0699">rRNA-binding</keyword>
<feature type="chain" id="PRO_0000130188" description="Small ribosomal subunit protein uS3">
    <location>
        <begin position="1"/>
        <end position="217"/>
    </location>
</feature>
<feature type="domain" description="KH type-2" evidence="1">
    <location>
        <begin position="40"/>
        <end position="110"/>
    </location>
</feature>
<sequence length="217" mass="24777">MGQKVCAHGFRVGPTLIKDWDSILYAEKHYKTLFIQDLKIRDLINKWFNQAQISRVLIERPSNKSIIININAKKPNIIIGKNGSEIDKLKKAIENMTFLKEVYINIHEVRKFNIDAAIVAQTIAAQLEKRVSFRKAMKTAIQASFKQGGQGIRVSCSGRLGGAEIARTEWYIEGRMPLHTLRADIDYSTAEAITTYGVIGVKVWIYKGEYKENKRYN</sequence>